<protein>
    <recommendedName>
        <fullName>Alcohol dehydrogenase</fullName>
        <ecNumber>1.1.1.1</ecNumber>
    </recommendedName>
</protein>
<reference key="1">
    <citation type="journal article" date="1984" name="J. Mol. Evol.">
        <title>Nucleotide sequence comparison of the Adh gene in three drosophilids.</title>
        <authorList>
            <person name="Cohn V.H."/>
            <person name="Thompson M.A."/>
            <person name="Moore G.P."/>
        </authorList>
    </citation>
    <scope>NUCLEOTIDE SEQUENCE [GENOMIC DNA]</scope>
</reference>
<reference key="2">
    <citation type="journal article" date="1984" name="Nature">
        <title>Conservation and change in the DNA sequences coding for alcohol dehydrogenase in sibling species of Drosophila.</title>
        <authorList>
            <person name="Bodmer M."/>
            <person name="Ashburner M."/>
        </authorList>
    </citation>
    <scope>NUCLEOTIDE SEQUENCE [GENOMIC DNA]</scope>
</reference>
<reference key="3">
    <citation type="journal article" date="1988" name="Mol. Biol. Evol.">
        <title>Organization and evolution of the alcohol dehydrogenase gene in Drosophila.</title>
        <authorList>
            <person name="Cohn V.H."/>
            <person name="Moore G.P."/>
        </authorList>
    </citation>
    <scope>NUCLEOTIDE SEQUENCE [GENOMIC DNA]</scope>
</reference>
<reference key="4">
    <citation type="journal article" date="1990" name="Proc. Natl. Acad. Sci. U.S.A.">
        <title>Genetic basis of the difference in alcohol dehydrogenase expression between Drosophila melanogaster and Drosophila simulans.</title>
        <authorList>
            <person name="Laurie C.C."/>
            <person name="Heath E.M."/>
            <person name="Jacobson J.W."/>
            <person name="Thomson M.S."/>
        </authorList>
    </citation>
    <scope>NUCLEOTIDE SEQUENCE [GENOMIC DNA]</scope>
</reference>
<reference key="5">
    <citation type="journal article" date="1991" name="Nature">
        <title>Adaptive protein evolution at the Adh locus in Drosophila.</title>
        <authorList>
            <person name="McDonald J.H."/>
            <person name="Kreitman M."/>
        </authorList>
    </citation>
    <scope>NUCLEOTIDE SEQUENCE [GENOMIC DNA]</scope>
    <source>
        <strain>Australia</strain>
        <strain>Brazzaville</strain>
        <strain>France</strain>
        <strain>Ottawa</strain>
    </source>
</reference>
<reference key="6">
    <citation type="journal article" date="2007" name="Nature">
        <title>Evolution of genes and genomes on the Drosophila phylogeny.</title>
        <authorList>
            <consortium name="Drosophila 12 genomes consortium"/>
        </authorList>
    </citation>
    <scope>NUCLEOTIDE SEQUENCE [LARGE SCALE GENOMIC DNA]</scope>
</reference>
<reference key="7">
    <citation type="journal article" date="2004" name="Genome Res.">
        <title>Patterns of evolutionary constraints in intronic and intergenic DNA of Drosophila.</title>
        <authorList>
            <person name="Halligan D.L."/>
            <person name="Eyre-Walker A."/>
            <person name="Andolfatto P."/>
            <person name="Keightley P.D."/>
        </authorList>
    </citation>
    <scope>NUCLEOTIDE SEQUENCE [GENOMIC DNA] OF 1-21</scope>
</reference>
<comment type="catalytic activity">
    <reaction evidence="3">
        <text>a primary alcohol + NAD(+) = an aldehyde + NADH + H(+)</text>
        <dbReference type="Rhea" id="RHEA:10736"/>
        <dbReference type="ChEBI" id="CHEBI:15378"/>
        <dbReference type="ChEBI" id="CHEBI:15734"/>
        <dbReference type="ChEBI" id="CHEBI:17478"/>
        <dbReference type="ChEBI" id="CHEBI:57540"/>
        <dbReference type="ChEBI" id="CHEBI:57945"/>
        <dbReference type="EC" id="1.1.1.1"/>
    </reaction>
</comment>
<comment type="catalytic activity">
    <reaction evidence="3">
        <text>a secondary alcohol + NAD(+) = a ketone + NADH + H(+)</text>
        <dbReference type="Rhea" id="RHEA:10740"/>
        <dbReference type="ChEBI" id="CHEBI:15378"/>
        <dbReference type="ChEBI" id="CHEBI:17087"/>
        <dbReference type="ChEBI" id="CHEBI:35681"/>
        <dbReference type="ChEBI" id="CHEBI:57540"/>
        <dbReference type="ChEBI" id="CHEBI:57945"/>
        <dbReference type="EC" id="1.1.1.1"/>
    </reaction>
</comment>
<comment type="subunit">
    <text>Homodimer.</text>
</comment>
<comment type="similarity">
    <text evidence="4">Belongs to the short-chain dehydrogenases/reductases (SDR) family.</text>
</comment>
<name>ADH_DROSI</name>
<evidence type="ECO:0000250" key="1"/>
<evidence type="ECO:0000250" key="2">
    <source>
        <dbReference type="UniProtKB" id="P00334"/>
    </source>
</evidence>
<evidence type="ECO:0000255" key="3">
    <source>
        <dbReference type="PROSITE-ProRule" id="PRU10001"/>
    </source>
</evidence>
<evidence type="ECO:0000305" key="4"/>
<proteinExistence type="inferred from homology"/>
<accession>Q24641</accession>
<accession>B4Q5K9</accession>
<accession>P07163</accession>
<accession>Q6SE55</accession>
<dbReference type="EC" id="1.1.1.1"/>
<dbReference type="EMBL" id="X00607">
    <property type="protein sequence ID" value="CAA25249.1"/>
    <property type="molecule type" value="Genomic_DNA"/>
</dbReference>
<dbReference type="EMBL" id="M19276">
    <property type="protein sequence ID" value="AAA28360.1"/>
    <property type="molecule type" value="Genomic_DNA"/>
</dbReference>
<dbReference type="EMBL" id="M19263">
    <property type="protein sequence ID" value="AAA28337.1"/>
    <property type="molecule type" value="Genomic_DNA"/>
</dbReference>
<dbReference type="EMBL" id="M36581">
    <property type="protein sequence ID" value="AAA28333.1"/>
    <property type="molecule type" value="Genomic_DNA"/>
</dbReference>
<dbReference type="EMBL" id="X57361">
    <property type="protein sequence ID" value="CAA40635.1"/>
    <property type="molecule type" value="Genomic_DNA"/>
</dbReference>
<dbReference type="EMBL" id="X57362">
    <property type="protein sequence ID" value="CAA40636.1"/>
    <property type="molecule type" value="Genomic_DNA"/>
</dbReference>
<dbReference type="EMBL" id="X57363">
    <property type="protein sequence ID" value="CAA40637.1"/>
    <property type="molecule type" value="Genomic_DNA"/>
</dbReference>
<dbReference type="EMBL" id="X57364">
    <property type="protein sequence ID" value="CAA40638.1"/>
    <property type="molecule type" value="Genomic_DNA"/>
</dbReference>
<dbReference type="EMBL" id="CM000361">
    <property type="protein sequence ID" value="EDX05053.1"/>
    <property type="molecule type" value="Genomic_DNA"/>
</dbReference>
<dbReference type="EMBL" id="AY459545">
    <property type="protein sequence ID" value="AAR23003.1"/>
    <property type="molecule type" value="Genomic_DNA"/>
</dbReference>
<dbReference type="PIR" id="S18273">
    <property type="entry name" value="S18273"/>
</dbReference>
<dbReference type="SMR" id="Q24641"/>
<dbReference type="STRING" id="7240.Q24641"/>
<dbReference type="EnsemblMetazoa" id="FBtr0223878">
    <property type="protein sequence ID" value="FBpp0222370"/>
    <property type="gene ID" value="FBgn0012824"/>
</dbReference>
<dbReference type="EnsemblMetazoa" id="XM_016180148.3">
    <property type="protein sequence ID" value="XP_016024999.1"/>
    <property type="gene ID" value="LOC6732347"/>
</dbReference>
<dbReference type="GeneID" id="6732347"/>
<dbReference type="HOGENOM" id="CLU_010194_2_16_1"/>
<dbReference type="OMA" id="WSKHWDS"/>
<dbReference type="OrthoDB" id="417891at2759"/>
<dbReference type="PhylomeDB" id="Q24641"/>
<dbReference type="ChiTaRS" id="Adh">
    <property type="organism name" value="fly"/>
</dbReference>
<dbReference type="Proteomes" id="UP000000304">
    <property type="component" value="Chromosome 2L"/>
</dbReference>
<dbReference type="Bgee" id="FBgn0012824">
    <property type="expression patterns" value="Expressed in adult organism and 3 other cell types or tissues"/>
</dbReference>
<dbReference type="GO" id="GO:0005829">
    <property type="term" value="C:cytosol"/>
    <property type="evidence" value="ECO:0007669"/>
    <property type="project" value="EnsemblMetazoa"/>
</dbReference>
<dbReference type="GO" id="GO:0004022">
    <property type="term" value="F:alcohol dehydrogenase (NAD+) activity"/>
    <property type="evidence" value="ECO:0007669"/>
    <property type="project" value="UniProtKB-EC"/>
</dbReference>
<dbReference type="GO" id="GO:0004029">
    <property type="term" value="F:aldehyde dehydrogenase (NAD+) activity"/>
    <property type="evidence" value="ECO:0007669"/>
    <property type="project" value="EnsemblMetazoa"/>
</dbReference>
<dbReference type="GO" id="GO:0042803">
    <property type="term" value="F:protein homodimerization activity"/>
    <property type="evidence" value="ECO:0007669"/>
    <property type="project" value="EnsemblMetazoa"/>
</dbReference>
<dbReference type="GO" id="GO:0006117">
    <property type="term" value="P:acetaldehyde metabolic process"/>
    <property type="evidence" value="ECO:0007669"/>
    <property type="project" value="EnsemblMetazoa"/>
</dbReference>
<dbReference type="GO" id="GO:0019431">
    <property type="term" value="P:acetyl-CoA biosynthetic process from ethanol"/>
    <property type="evidence" value="ECO:0007669"/>
    <property type="project" value="EnsemblMetazoa"/>
</dbReference>
<dbReference type="GO" id="GO:0046164">
    <property type="term" value="P:alcohol catabolic process"/>
    <property type="evidence" value="ECO:0007669"/>
    <property type="project" value="EnsemblMetazoa"/>
</dbReference>
<dbReference type="GO" id="GO:0048149">
    <property type="term" value="P:behavioral response to ethanol"/>
    <property type="evidence" value="ECO:0007669"/>
    <property type="project" value="EnsemblMetazoa"/>
</dbReference>
<dbReference type="GO" id="GO:0006734">
    <property type="term" value="P:NADH metabolic process"/>
    <property type="evidence" value="ECO:0007669"/>
    <property type="project" value="EnsemblMetazoa"/>
</dbReference>
<dbReference type="CDD" id="cd05323">
    <property type="entry name" value="ADH_SDR_c_like"/>
    <property type="match status" value="1"/>
</dbReference>
<dbReference type="FunFam" id="3.40.50.720:FF:000302">
    <property type="entry name" value="Alcohol dehydrogenase"/>
    <property type="match status" value="1"/>
</dbReference>
<dbReference type="Gene3D" id="3.40.50.720">
    <property type="entry name" value="NAD(P)-binding Rossmann-like Domain"/>
    <property type="match status" value="1"/>
</dbReference>
<dbReference type="InterPro" id="IPR002425">
    <property type="entry name" value="ADH_Drosophila-type"/>
</dbReference>
<dbReference type="InterPro" id="IPR036291">
    <property type="entry name" value="NAD(P)-bd_dom_sf"/>
</dbReference>
<dbReference type="InterPro" id="IPR020904">
    <property type="entry name" value="Sc_DH/Rdtase_CS"/>
</dbReference>
<dbReference type="InterPro" id="IPR002347">
    <property type="entry name" value="SDR_fam"/>
</dbReference>
<dbReference type="PANTHER" id="PTHR42901">
    <property type="entry name" value="ALCOHOL DEHYDROGENASE"/>
    <property type="match status" value="1"/>
</dbReference>
<dbReference type="PANTHER" id="PTHR42901:SF1">
    <property type="entry name" value="ALCOHOL DEHYDROGENASE"/>
    <property type="match status" value="1"/>
</dbReference>
<dbReference type="Pfam" id="PF00106">
    <property type="entry name" value="adh_short"/>
    <property type="match status" value="1"/>
</dbReference>
<dbReference type="PRINTS" id="PR01168">
    <property type="entry name" value="ALCDHDRGNASE"/>
</dbReference>
<dbReference type="PRINTS" id="PR01167">
    <property type="entry name" value="INSADHFAMILY"/>
</dbReference>
<dbReference type="PRINTS" id="PR00080">
    <property type="entry name" value="SDRFAMILY"/>
</dbReference>
<dbReference type="SUPFAM" id="SSF51735">
    <property type="entry name" value="NAD(P)-binding Rossmann-fold domains"/>
    <property type="match status" value="1"/>
</dbReference>
<dbReference type="PROSITE" id="PS00061">
    <property type="entry name" value="ADH_SHORT"/>
    <property type="match status" value="1"/>
</dbReference>
<gene>
    <name type="primary">Adh</name>
    <name type="ORF">GD23968</name>
</gene>
<keyword id="KW-0520">NAD</keyword>
<keyword id="KW-0560">Oxidoreductase</keyword>
<keyword id="KW-1185">Reference proteome</keyword>
<organism>
    <name type="scientific">Drosophila simulans</name>
    <name type="common">Fruit fly</name>
    <dbReference type="NCBI Taxonomy" id="7240"/>
    <lineage>
        <taxon>Eukaryota</taxon>
        <taxon>Metazoa</taxon>
        <taxon>Ecdysozoa</taxon>
        <taxon>Arthropoda</taxon>
        <taxon>Hexapoda</taxon>
        <taxon>Insecta</taxon>
        <taxon>Pterygota</taxon>
        <taxon>Neoptera</taxon>
        <taxon>Endopterygota</taxon>
        <taxon>Diptera</taxon>
        <taxon>Brachycera</taxon>
        <taxon>Muscomorpha</taxon>
        <taxon>Ephydroidea</taxon>
        <taxon>Drosophilidae</taxon>
        <taxon>Drosophila</taxon>
        <taxon>Sophophora</taxon>
    </lineage>
</organism>
<feature type="initiator methionine" description="Removed" evidence="2">
    <location>
        <position position="1"/>
    </location>
</feature>
<feature type="chain" id="PRO_0000054494" description="Alcohol dehydrogenase">
    <location>
        <begin position="2"/>
        <end position="256"/>
    </location>
</feature>
<feature type="active site" description="Proton acceptor" evidence="3">
    <location>
        <position position="153"/>
    </location>
</feature>
<feature type="binding site" evidence="1">
    <location>
        <begin position="12"/>
        <end position="35"/>
    </location>
    <ligand>
        <name>NAD(+)</name>
        <dbReference type="ChEBI" id="CHEBI:57540"/>
    </ligand>
</feature>
<feature type="binding site" evidence="1">
    <location>
        <position position="140"/>
    </location>
    <ligand>
        <name>substrate</name>
    </ligand>
</feature>
<feature type="sequence conflict" description="In Ref. 2; AAA28360." evidence="4" ref="2">
    <original>A</original>
    <variation>V</variation>
    <location>
        <position position="52"/>
    </location>
</feature>
<feature type="sequence conflict" description="In Ref. 2; AAA28360." evidence="4" ref="2">
    <original>T</original>
    <variation>N</variation>
    <location>
        <position position="156"/>
    </location>
</feature>
<sequence length="256" mass="27745">MAFTLTNKNVIFVAGLGGIGLDTSKELLKRDLKNLVILDRIENPAAIAELKAINPKVTVTFYPYDVTVPIAETTKLLKTIFAKLKTVDVLINGAGILDDHQIERTIAVNYTGLVNTTTAILDFWDKRKGGPGGIICNIGSVTGFNAIYQVPVYSGTKAAVVNFTSSLAKLAPITGVTAYTVNPGITRTTLVHKFNSWLDVEPQVAEKLLAHPTQPSLACAENFVKAIELNQNGAIWKLDLGTLEAIQWTKHWDSGI</sequence>